<proteinExistence type="uncertain"/>
<dbReference type="EC" id="7.1.1.-" evidence="1"/>
<dbReference type="EMBL" id="EU017268">
    <property type="protein sequence ID" value="ABU85675.1"/>
    <property type="molecule type" value="Genomic_DNA"/>
</dbReference>
<dbReference type="SMR" id="A9QC82"/>
<dbReference type="GO" id="GO:0009535">
    <property type="term" value="C:chloroplast thylakoid membrane"/>
    <property type="evidence" value="ECO:0007669"/>
    <property type="project" value="UniProtKB-SubCell"/>
</dbReference>
<dbReference type="GO" id="GO:0045271">
    <property type="term" value="C:respiratory chain complex I"/>
    <property type="evidence" value="ECO:0007669"/>
    <property type="project" value="TreeGrafter"/>
</dbReference>
<dbReference type="GO" id="GO:0051539">
    <property type="term" value="F:4 iron, 4 sulfur cluster binding"/>
    <property type="evidence" value="ECO:0007669"/>
    <property type="project" value="UniProtKB-KW"/>
</dbReference>
<dbReference type="GO" id="GO:0005506">
    <property type="term" value="F:iron ion binding"/>
    <property type="evidence" value="ECO:0007669"/>
    <property type="project" value="UniProtKB-UniRule"/>
</dbReference>
<dbReference type="GO" id="GO:0008137">
    <property type="term" value="F:NADH dehydrogenase (ubiquinone) activity"/>
    <property type="evidence" value="ECO:0007669"/>
    <property type="project" value="InterPro"/>
</dbReference>
<dbReference type="GO" id="GO:0048038">
    <property type="term" value="F:quinone binding"/>
    <property type="evidence" value="ECO:0007669"/>
    <property type="project" value="UniProtKB-KW"/>
</dbReference>
<dbReference type="GO" id="GO:0009060">
    <property type="term" value="P:aerobic respiration"/>
    <property type="evidence" value="ECO:0007669"/>
    <property type="project" value="TreeGrafter"/>
</dbReference>
<dbReference type="GO" id="GO:0015990">
    <property type="term" value="P:electron transport coupled proton transport"/>
    <property type="evidence" value="ECO:0007669"/>
    <property type="project" value="TreeGrafter"/>
</dbReference>
<dbReference type="GO" id="GO:0019684">
    <property type="term" value="P:photosynthesis, light reaction"/>
    <property type="evidence" value="ECO:0007669"/>
    <property type="project" value="UniProtKB-UniRule"/>
</dbReference>
<dbReference type="FunFam" id="3.40.50.12280:FF:000003">
    <property type="entry name" value="NAD(P)H-quinone oxidoreductase subunit K, chloroplastic"/>
    <property type="match status" value="1"/>
</dbReference>
<dbReference type="Gene3D" id="3.40.50.12280">
    <property type="match status" value="1"/>
</dbReference>
<dbReference type="HAMAP" id="MF_01356">
    <property type="entry name" value="NDH1_NuoB"/>
    <property type="match status" value="1"/>
</dbReference>
<dbReference type="InterPro" id="IPR006137">
    <property type="entry name" value="NADH_UbQ_OxRdtase-like_20kDa"/>
</dbReference>
<dbReference type="InterPro" id="IPR006138">
    <property type="entry name" value="NADH_UQ_OxRdtase_20Kd_su"/>
</dbReference>
<dbReference type="NCBIfam" id="TIGR01957">
    <property type="entry name" value="nuoB_fam"/>
    <property type="match status" value="1"/>
</dbReference>
<dbReference type="NCBIfam" id="NF005012">
    <property type="entry name" value="PRK06411.1"/>
    <property type="match status" value="1"/>
</dbReference>
<dbReference type="PANTHER" id="PTHR11995">
    <property type="entry name" value="NADH DEHYDROGENASE"/>
    <property type="match status" value="1"/>
</dbReference>
<dbReference type="PANTHER" id="PTHR11995:SF14">
    <property type="entry name" value="NADH DEHYDROGENASE [UBIQUINONE] IRON-SULFUR PROTEIN 7, MITOCHONDRIAL"/>
    <property type="match status" value="1"/>
</dbReference>
<dbReference type="Pfam" id="PF01058">
    <property type="entry name" value="Oxidored_q6"/>
    <property type="match status" value="1"/>
</dbReference>
<dbReference type="SUPFAM" id="SSF56770">
    <property type="entry name" value="HydA/Nqo6-like"/>
    <property type="match status" value="1"/>
</dbReference>
<dbReference type="PROSITE" id="PS01150">
    <property type="entry name" value="COMPLEX1_20K"/>
    <property type="match status" value="1"/>
</dbReference>
<gene>
    <name evidence="1" type="primary">ndhK</name>
</gene>
<geneLocation type="chloroplast"/>
<comment type="function">
    <text evidence="1">NDH shuttles electrons from NAD(P)H:plastoquinone, via FMN and iron-sulfur (Fe-S) centers, to quinones in the photosynthetic chain and possibly in a chloroplast respiratory chain. The immediate electron acceptor for the enzyme in this species is believed to be plastoquinone. Couples the redox reaction to proton translocation, and thus conserves the redox energy in a proton gradient.</text>
</comment>
<comment type="catalytic activity">
    <reaction evidence="1">
        <text>a plastoquinone + NADH + (n+1) H(+)(in) = a plastoquinol + NAD(+) + n H(+)(out)</text>
        <dbReference type="Rhea" id="RHEA:42608"/>
        <dbReference type="Rhea" id="RHEA-COMP:9561"/>
        <dbReference type="Rhea" id="RHEA-COMP:9562"/>
        <dbReference type="ChEBI" id="CHEBI:15378"/>
        <dbReference type="ChEBI" id="CHEBI:17757"/>
        <dbReference type="ChEBI" id="CHEBI:57540"/>
        <dbReference type="ChEBI" id="CHEBI:57945"/>
        <dbReference type="ChEBI" id="CHEBI:62192"/>
    </reaction>
</comment>
<comment type="catalytic activity">
    <reaction evidence="1">
        <text>a plastoquinone + NADPH + (n+1) H(+)(in) = a plastoquinol + NADP(+) + n H(+)(out)</text>
        <dbReference type="Rhea" id="RHEA:42612"/>
        <dbReference type="Rhea" id="RHEA-COMP:9561"/>
        <dbReference type="Rhea" id="RHEA-COMP:9562"/>
        <dbReference type="ChEBI" id="CHEBI:15378"/>
        <dbReference type="ChEBI" id="CHEBI:17757"/>
        <dbReference type="ChEBI" id="CHEBI:57783"/>
        <dbReference type="ChEBI" id="CHEBI:58349"/>
        <dbReference type="ChEBI" id="CHEBI:62192"/>
    </reaction>
</comment>
<comment type="cofactor">
    <cofactor evidence="1">
        <name>[4Fe-4S] cluster</name>
        <dbReference type="ChEBI" id="CHEBI:49883"/>
    </cofactor>
    <text evidence="1">Binds 1 [4Fe-4S] cluster.</text>
</comment>
<comment type="subunit">
    <text evidence="1">NDH is composed of at least 16 different subunits, 5 of which are encoded in the nucleus.</text>
</comment>
<comment type="subcellular location">
    <subcellularLocation>
        <location evidence="1">Plastid</location>
        <location evidence="1">Chloroplast thylakoid membrane</location>
        <topology evidence="1">Peripheral membrane protein</topology>
        <orientation evidence="1">Stromal side</orientation>
    </subcellularLocation>
</comment>
<comment type="similarity">
    <text evidence="1">Belongs to the complex I 20 kDa subunit family.</text>
</comment>
<comment type="caution">
    <text evidence="3">Could be the product of a pseudogene.</text>
</comment>
<organism>
    <name type="scientific">Trachelium caeruleum</name>
    <name type="common">Blue throatwort</name>
    <dbReference type="NCBI Taxonomy" id="28494"/>
    <lineage>
        <taxon>Eukaryota</taxon>
        <taxon>Viridiplantae</taxon>
        <taxon>Streptophyta</taxon>
        <taxon>Embryophyta</taxon>
        <taxon>Tracheophyta</taxon>
        <taxon>Spermatophyta</taxon>
        <taxon>Magnoliopsida</taxon>
        <taxon>eudicotyledons</taxon>
        <taxon>Gunneridae</taxon>
        <taxon>Pentapetalae</taxon>
        <taxon>asterids</taxon>
        <taxon>campanulids</taxon>
        <taxon>Asterales</taxon>
        <taxon>Campanulaceae</taxon>
        <taxon>Trachelium</taxon>
    </lineage>
</organism>
<protein>
    <recommendedName>
        <fullName evidence="1">NAD(P)H-quinone oxidoreductase subunit K, chloroplastic</fullName>
        <ecNumber evidence="1">7.1.1.-</ecNumber>
    </recommendedName>
    <alternativeName>
        <fullName evidence="1">NAD(P)H dehydrogenase subunit K</fullName>
    </alternativeName>
    <alternativeName>
        <fullName evidence="1">NADH-plastoquinone oxidoreductase subunit K</fullName>
    </alternativeName>
</protein>
<accession>A9QC82</accession>
<sequence length="227" mass="25415">MTSIDFPLLNRRTQNSVISTTPNELSNWSRLSSLWPLLYGTSCCFIEFASLIGSRFDFDRYGLVPRSSPRQADLILTAGTVTMKMAPSLVRLYEQMPEPKYVIAMGACTITGGMFSTDSYSTVRGVDKLLPVDVYLPGCPPKPEAVIDAITKLRKKISREIYADRIRSHRTNRSFTTNHKFQVGRSSHTGNYDQGFLSKPPSISEIPPETFFKYKSQSSVSSHALVN</sequence>
<evidence type="ECO:0000255" key="1">
    <source>
        <dbReference type="HAMAP-Rule" id="MF_01356"/>
    </source>
</evidence>
<evidence type="ECO:0000256" key="2">
    <source>
        <dbReference type="SAM" id="MobiDB-lite"/>
    </source>
</evidence>
<evidence type="ECO:0000305" key="3"/>
<keyword id="KW-0004">4Fe-4S</keyword>
<keyword id="KW-0150">Chloroplast</keyword>
<keyword id="KW-0408">Iron</keyword>
<keyword id="KW-0411">Iron-sulfur</keyword>
<keyword id="KW-0472">Membrane</keyword>
<keyword id="KW-0479">Metal-binding</keyword>
<keyword id="KW-0520">NAD</keyword>
<keyword id="KW-0521">NADP</keyword>
<keyword id="KW-0934">Plastid</keyword>
<keyword id="KW-0618">Plastoquinone</keyword>
<keyword id="KW-0874">Quinone</keyword>
<keyword id="KW-0793">Thylakoid</keyword>
<keyword id="KW-1278">Translocase</keyword>
<keyword id="KW-0813">Transport</keyword>
<name>NDHK_TRACE</name>
<feature type="chain" id="PRO_0000358585" description="NAD(P)H-quinone oxidoreductase subunit K, chloroplastic">
    <location>
        <begin position="1"/>
        <end position="227"/>
    </location>
</feature>
<feature type="region of interest" description="Disordered" evidence="2">
    <location>
        <begin position="173"/>
        <end position="201"/>
    </location>
</feature>
<feature type="compositionally biased region" description="Polar residues" evidence="2">
    <location>
        <begin position="173"/>
        <end position="192"/>
    </location>
</feature>
<feature type="binding site" evidence="1">
    <location>
        <position position="43"/>
    </location>
    <ligand>
        <name>[4Fe-4S] cluster</name>
        <dbReference type="ChEBI" id="CHEBI:49883"/>
    </ligand>
</feature>
<feature type="binding site" evidence="1">
    <location>
        <position position="44"/>
    </location>
    <ligand>
        <name>[4Fe-4S] cluster</name>
        <dbReference type="ChEBI" id="CHEBI:49883"/>
    </ligand>
</feature>
<feature type="binding site" evidence="1">
    <location>
        <position position="108"/>
    </location>
    <ligand>
        <name>[4Fe-4S] cluster</name>
        <dbReference type="ChEBI" id="CHEBI:49883"/>
    </ligand>
</feature>
<feature type="binding site" evidence="1">
    <location>
        <position position="139"/>
    </location>
    <ligand>
        <name>[4Fe-4S] cluster</name>
        <dbReference type="ChEBI" id="CHEBI:49883"/>
    </ligand>
</feature>
<reference key="1">
    <citation type="journal article" date="2007" name="Proc. Natl. Acad. Sci. U.S.A.">
        <title>Analysis of 81 genes from 64 plastid genomes resolves relationships in angiosperms and identifies genome-scale evolutionary patterns.</title>
        <authorList>
            <person name="Jansen R.K."/>
            <person name="Cai Z."/>
            <person name="Raubeson L.A."/>
            <person name="Daniell H."/>
            <person name="dePamphilis C.W."/>
            <person name="Leebens-Mack J."/>
            <person name="Muller K.F."/>
            <person name="Guisinger-Bellian M."/>
            <person name="Haberle R.C."/>
            <person name="Hansen A.K."/>
            <person name="Chumley T.W."/>
            <person name="Lee S.B."/>
            <person name="Peery R."/>
            <person name="McNeal J.R."/>
            <person name="Kuehl J.V."/>
            <person name="Boore J.L."/>
        </authorList>
    </citation>
    <scope>NUCLEOTIDE SEQUENCE [GENOMIC DNA]</scope>
</reference>
<reference key="2">
    <citation type="journal article" date="2008" name="J. Mol. Evol.">
        <title>Extensive rearrangements in the chloroplast genome of Trachelium caeruleum are associated with repeats and tRNA genes.</title>
        <authorList>
            <person name="Haberle R.C."/>
            <person name="Fourcade H.M."/>
            <person name="Boore J.L."/>
            <person name="Jansen R.K."/>
        </authorList>
    </citation>
    <scope>DISCUSSION OF SEQUENCE</scope>
    <scope>IDENTIFICATION AS A POSSIBLE PSEUDOGENE</scope>
</reference>